<gene>
    <name type="primary">AGL92</name>
    <name type="ordered locus">At1g31640</name>
    <name type="ORF">F27M3.16</name>
</gene>
<evidence type="ECO:0000255" key="1"/>
<evidence type="ECO:0000255" key="2">
    <source>
        <dbReference type="PROSITE-ProRule" id="PRU00251"/>
    </source>
</evidence>
<evidence type="ECO:0000256" key="3">
    <source>
        <dbReference type="SAM" id="MobiDB-lite"/>
    </source>
</evidence>
<evidence type="ECO:0000269" key="4">
    <source>
    </source>
</evidence>
<keyword id="KW-0175">Coiled coil</keyword>
<keyword id="KW-0238">DNA-binding</keyword>
<keyword id="KW-0539">Nucleus</keyword>
<keyword id="KW-1185">Reference proteome</keyword>
<keyword id="KW-0804">Transcription</keyword>
<keyword id="KW-0805">Transcription regulation</keyword>
<name>AGL92_ARATH</name>
<dbReference type="EMBL" id="AC074360">
    <property type="protein sequence ID" value="AAG60139.1"/>
    <property type="molecule type" value="Genomic_DNA"/>
</dbReference>
<dbReference type="EMBL" id="CP002684">
    <property type="protein sequence ID" value="AEE31379.1"/>
    <property type="molecule type" value="Genomic_DNA"/>
</dbReference>
<dbReference type="RefSeq" id="NP_174445.1">
    <property type="nucleotide sequence ID" value="NM_102899.1"/>
</dbReference>
<dbReference type="SMR" id="Q9C6V4"/>
<dbReference type="BioGRID" id="25286">
    <property type="interactions" value="11"/>
</dbReference>
<dbReference type="FunCoup" id="Q9C6V4">
    <property type="interactions" value="13"/>
</dbReference>
<dbReference type="IntAct" id="Q9C6V4">
    <property type="interactions" value="9"/>
</dbReference>
<dbReference type="STRING" id="3702.Q9C6V4"/>
<dbReference type="PaxDb" id="3702-AT1G31640.1"/>
<dbReference type="EnsemblPlants" id="AT1G31640.1">
    <property type="protein sequence ID" value="AT1G31640.1"/>
    <property type="gene ID" value="AT1G31640"/>
</dbReference>
<dbReference type="GeneID" id="840051"/>
<dbReference type="Gramene" id="AT1G31640.1">
    <property type="protein sequence ID" value="AT1G31640.1"/>
    <property type="gene ID" value="AT1G31640"/>
</dbReference>
<dbReference type="KEGG" id="ath:AT1G31640"/>
<dbReference type="Araport" id="AT1G31640"/>
<dbReference type="TAIR" id="AT1G31640">
    <property type="gene designation" value="AGL92"/>
</dbReference>
<dbReference type="eggNOG" id="KOG0014">
    <property type="taxonomic scope" value="Eukaryota"/>
</dbReference>
<dbReference type="HOGENOM" id="CLU_053053_7_1_1"/>
<dbReference type="InParanoid" id="Q9C6V4"/>
<dbReference type="PhylomeDB" id="Q9C6V4"/>
<dbReference type="PRO" id="PR:Q9C6V4"/>
<dbReference type="Proteomes" id="UP000006548">
    <property type="component" value="Chromosome 1"/>
</dbReference>
<dbReference type="ExpressionAtlas" id="Q9C6V4">
    <property type="expression patterns" value="baseline and differential"/>
</dbReference>
<dbReference type="GO" id="GO:0005634">
    <property type="term" value="C:nucleus"/>
    <property type="evidence" value="ECO:0007669"/>
    <property type="project" value="UniProtKB-SubCell"/>
</dbReference>
<dbReference type="GO" id="GO:0000987">
    <property type="term" value="F:cis-regulatory region sequence-specific DNA binding"/>
    <property type="evidence" value="ECO:0007669"/>
    <property type="project" value="InterPro"/>
</dbReference>
<dbReference type="GO" id="GO:0003700">
    <property type="term" value="F:DNA-binding transcription factor activity"/>
    <property type="evidence" value="ECO:0000250"/>
    <property type="project" value="TAIR"/>
</dbReference>
<dbReference type="GO" id="GO:0000981">
    <property type="term" value="F:DNA-binding transcription factor activity, RNA polymerase II-specific"/>
    <property type="evidence" value="ECO:0007669"/>
    <property type="project" value="InterPro"/>
</dbReference>
<dbReference type="GO" id="GO:0046983">
    <property type="term" value="F:protein dimerization activity"/>
    <property type="evidence" value="ECO:0007669"/>
    <property type="project" value="InterPro"/>
</dbReference>
<dbReference type="GO" id="GO:0045944">
    <property type="term" value="P:positive regulation of transcription by RNA polymerase II"/>
    <property type="evidence" value="ECO:0007669"/>
    <property type="project" value="InterPro"/>
</dbReference>
<dbReference type="CDD" id="cd00266">
    <property type="entry name" value="MADS_SRF_like"/>
    <property type="match status" value="1"/>
</dbReference>
<dbReference type="FunFam" id="3.40.1810.10:FF:000046">
    <property type="entry name" value="Agamous-like MADS-box protein AGL92"/>
    <property type="match status" value="1"/>
</dbReference>
<dbReference type="Gene3D" id="3.40.1810.10">
    <property type="entry name" value="Transcription factor, MADS-box"/>
    <property type="match status" value="1"/>
</dbReference>
<dbReference type="InterPro" id="IPR050142">
    <property type="entry name" value="MADS-box/MEF2_TF"/>
</dbReference>
<dbReference type="InterPro" id="IPR033897">
    <property type="entry name" value="SRF-like_MADS-box"/>
</dbReference>
<dbReference type="InterPro" id="IPR002100">
    <property type="entry name" value="TF_MADSbox"/>
</dbReference>
<dbReference type="InterPro" id="IPR036879">
    <property type="entry name" value="TF_MADSbox_sf"/>
</dbReference>
<dbReference type="PANTHER" id="PTHR48019">
    <property type="entry name" value="SERUM RESPONSE FACTOR HOMOLOG"/>
    <property type="match status" value="1"/>
</dbReference>
<dbReference type="Pfam" id="PF00319">
    <property type="entry name" value="SRF-TF"/>
    <property type="match status" value="1"/>
</dbReference>
<dbReference type="PRINTS" id="PR00404">
    <property type="entry name" value="MADSDOMAIN"/>
</dbReference>
<dbReference type="SMART" id="SM00432">
    <property type="entry name" value="MADS"/>
    <property type="match status" value="1"/>
</dbReference>
<dbReference type="SUPFAM" id="SSF55455">
    <property type="entry name" value="SRF-like"/>
    <property type="match status" value="1"/>
</dbReference>
<dbReference type="PROSITE" id="PS50066">
    <property type="entry name" value="MADS_BOX_2"/>
    <property type="match status" value="1"/>
</dbReference>
<protein>
    <recommendedName>
        <fullName>Agamous-like MADS-box protein AGL92</fullName>
    </recommendedName>
</protein>
<proteinExistence type="evidence at protein level"/>
<comment type="function">
    <text>Putative transcription factor.</text>
</comment>
<comment type="subunit">
    <text evidence="4">Interacts with AGL62.</text>
</comment>
<comment type="subcellular location">
    <subcellularLocation>
        <location evidence="2">Nucleus</location>
    </subcellularLocation>
</comment>
<reference key="1">
    <citation type="journal article" date="2000" name="Nature">
        <title>Sequence and analysis of chromosome 1 of the plant Arabidopsis thaliana.</title>
        <authorList>
            <person name="Theologis A."/>
            <person name="Ecker J.R."/>
            <person name="Palm C.J."/>
            <person name="Federspiel N.A."/>
            <person name="Kaul S."/>
            <person name="White O."/>
            <person name="Alonso J."/>
            <person name="Altafi H."/>
            <person name="Araujo R."/>
            <person name="Bowman C.L."/>
            <person name="Brooks S.Y."/>
            <person name="Buehler E."/>
            <person name="Chan A."/>
            <person name="Chao Q."/>
            <person name="Chen H."/>
            <person name="Cheuk R.F."/>
            <person name="Chin C.W."/>
            <person name="Chung M.K."/>
            <person name="Conn L."/>
            <person name="Conway A.B."/>
            <person name="Conway A.R."/>
            <person name="Creasy T.H."/>
            <person name="Dewar K."/>
            <person name="Dunn P."/>
            <person name="Etgu P."/>
            <person name="Feldblyum T.V."/>
            <person name="Feng J.-D."/>
            <person name="Fong B."/>
            <person name="Fujii C.Y."/>
            <person name="Gill J.E."/>
            <person name="Goldsmith A.D."/>
            <person name="Haas B."/>
            <person name="Hansen N.F."/>
            <person name="Hughes B."/>
            <person name="Huizar L."/>
            <person name="Hunter J.L."/>
            <person name="Jenkins J."/>
            <person name="Johnson-Hopson C."/>
            <person name="Khan S."/>
            <person name="Khaykin E."/>
            <person name="Kim C.J."/>
            <person name="Koo H.L."/>
            <person name="Kremenetskaia I."/>
            <person name="Kurtz D.B."/>
            <person name="Kwan A."/>
            <person name="Lam B."/>
            <person name="Langin-Hooper S."/>
            <person name="Lee A."/>
            <person name="Lee J.M."/>
            <person name="Lenz C.A."/>
            <person name="Li J.H."/>
            <person name="Li Y.-P."/>
            <person name="Lin X."/>
            <person name="Liu S.X."/>
            <person name="Liu Z.A."/>
            <person name="Luros J.S."/>
            <person name="Maiti R."/>
            <person name="Marziali A."/>
            <person name="Militscher J."/>
            <person name="Miranda M."/>
            <person name="Nguyen M."/>
            <person name="Nierman W.C."/>
            <person name="Osborne B.I."/>
            <person name="Pai G."/>
            <person name="Peterson J."/>
            <person name="Pham P.K."/>
            <person name="Rizzo M."/>
            <person name="Rooney T."/>
            <person name="Rowley D."/>
            <person name="Sakano H."/>
            <person name="Salzberg S.L."/>
            <person name="Schwartz J.R."/>
            <person name="Shinn P."/>
            <person name="Southwick A.M."/>
            <person name="Sun H."/>
            <person name="Tallon L.J."/>
            <person name="Tambunga G."/>
            <person name="Toriumi M.J."/>
            <person name="Town C.D."/>
            <person name="Utterback T."/>
            <person name="Van Aken S."/>
            <person name="Vaysberg M."/>
            <person name="Vysotskaia V.S."/>
            <person name="Walker M."/>
            <person name="Wu D."/>
            <person name="Yu G."/>
            <person name="Fraser C.M."/>
            <person name="Venter J.C."/>
            <person name="Davis R.W."/>
        </authorList>
    </citation>
    <scope>NUCLEOTIDE SEQUENCE [LARGE SCALE GENOMIC DNA]</scope>
    <source>
        <strain>cv. Columbia</strain>
    </source>
</reference>
<reference key="2">
    <citation type="journal article" date="2017" name="Plant J.">
        <title>Araport11: a complete reannotation of the Arabidopsis thaliana reference genome.</title>
        <authorList>
            <person name="Cheng C.Y."/>
            <person name="Krishnakumar V."/>
            <person name="Chan A.P."/>
            <person name="Thibaud-Nissen F."/>
            <person name="Schobel S."/>
            <person name="Town C.D."/>
        </authorList>
    </citation>
    <scope>GENOME REANNOTATION</scope>
    <source>
        <strain>cv. Columbia</strain>
    </source>
</reference>
<reference key="3">
    <citation type="journal article" date="2005" name="Plant Cell">
        <title>Comprehensive interaction map of the Arabidopsis MADS Box transcription factors.</title>
        <authorList>
            <person name="de Folter S."/>
            <person name="Immink R.G.H."/>
            <person name="Kieffer M."/>
            <person name="Parenicova L."/>
            <person name="Henz S.R."/>
            <person name="Weigel D."/>
            <person name="Busscher M."/>
            <person name="Kooiker M."/>
            <person name="Colombo L."/>
            <person name="Kater M.M."/>
            <person name="Davies B."/>
            <person name="Angenent G.C."/>
        </authorList>
    </citation>
    <scope>INTERACTION WITH AGL62</scope>
</reference>
<organism>
    <name type="scientific">Arabidopsis thaliana</name>
    <name type="common">Mouse-ear cress</name>
    <dbReference type="NCBI Taxonomy" id="3702"/>
    <lineage>
        <taxon>Eukaryota</taxon>
        <taxon>Viridiplantae</taxon>
        <taxon>Streptophyta</taxon>
        <taxon>Embryophyta</taxon>
        <taxon>Tracheophyta</taxon>
        <taxon>Spermatophyta</taxon>
        <taxon>Magnoliopsida</taxon>
        <taxon>eudicotyledons</taxon>
        <taxon>Gunneridae</taxon>
        <taxon>Pentapetalae</taxon>
        <taxon>rosids</taxon>
        <taxon>malvids</taxon>
        <taxon>Brassicales</taxon>
        <taxon>Brassicaceae</taxon>
        <taxon>Camelineae</taxon>
        <taxon>Arabidopsis</taxon>
    </lineage>
</organism>
<accession>Q9C6V4</accession>
<feature type="chain" id="PRO_0000363654" description="Agamous-like MADS-box protein AGL92">
    <location>
        <begin position="1"/>
        <end position="464"/>
    </location>
</feature>
<feature type="domain" description="MADS-box" evidence="2">
    <location>
        <begin position="1"/>
        <end position="60"/>
    </location>
</feature>
<feature type="region of interest" description="Disordered" evidence="3">
    <location>
        <begin position="443"/>
        <end position="464"/>
    </location>
</feature>
<feature type="coiled-coil region" evidence="1">
    <location>
        <begin position="85"/>
        <end position="114"/>
    </location>
</feature>
<feature type="compositionally biased region" description="Low complexity" evidence="3">
    <location>
        <begin position="451"/>
        <end position="464"/>
    </location>
</feature>
<sequence>MRTKTKLVLIPDRHFRRATFRKRNAGIRKKLHELTTLCDIKACAVIYSPFENPTVWPSTEGVQEVISEFMEKPATERSKTMMSHETFLRDQITKEQNKLESLRRENRETQLKHFMFDCVGGKMSEQQYGARDLQDLSLFTDQYLNQLNARKKFLTEYGESSSSVPPLFDVAGANPPVVADQAAVTVPPLFAVAGANLPVVADQAAVTVPPLFAVAGANLPVVADQAAVNVPTGFHNMNVNQNQYEPVQPYVPTGFSDHIQYQNMNFNQNQQEPVHYQALAVAGAGLPMTQNQYEPVHYQSLAVAGGGLPMSQLQYEPVQPYIPTVFSDNVQYQHMNLYQNQQEPVHYQALGVAGAGLPMNQNQYEPVQPYVPTGFSDHFQFENMNLNQNQQEPVQYQAPVDFNHQIQQGNYDMNLNQNMKHAHIPFMDGNYYNYHQPPTVGLTSTGHMPSTTTTTTNNNNNNNV</sequence>